<gene>
    <name type="primary">caiB</name>
    <name type="ordered locus">Z0044</name>
    <name type="ordered locus">ECs0041</name>
</gene>
<reference key="1">
    <citation type="journal article" date="2001" name="Nature">
        <title>Genome sequence of enterohaemorrhagic Escherichia coli O157:H7.</title>
        <authorList>
            <person name="Perna N.T."/>
            <person name="Plunkett G. III"/>
            <person name="Burland V."/>
            <person name="Mau B."/>
            <person name="Glasner J.D."/>
            <person name="Rose D.J."/>
            <person name="Mayhew G.F."/>
            <person name="Evans P.S."/>
            <person name="Gregor J."/>
            <person name="Kirkpatrick H.A."/>
            <person name="Posfai G."/>
            <person name="Hackett J."/>
            <person name="Klink S."/>
            <person name="Boutin A."/>
            <person name="Shao Y."/>
            <person name="Miller L."/>
            <person name="Grotbeck E.J."/>
            <person name="Davis N.W."/>
            <person name="Lim A."/>
            <person name="Dimalanta E.T."/>
            <person name="Potamousis K."/>
            <person name="Apodaca J."/>
            <person name="Anantharaman T.S."/>
            <person name="Lin J."/>
            <person name="Yen G."/>
            <person name="Schwartz D.C."/>
            <person name="Welch R.A."/>
            <person name="Blattner F.R."/>
        </authorList>
    </citation>
    <scope>NUCLEOTIDE SEQUENCE [LARGE SCALE GENOMIC DNA]</scope>
    <source>
        <strain>O157:H7 / EDL933 / ATCC 700927 / EHEC</strain>
    </source>
</reference>
<reference key="2">
    <citation type="journal article" date="2001" name="DNA Res.">
        <title>Complete genome sequence of enterohemorrhagic Escherichia coli O157:H7 and genomic comparison with a laboratory strain K-12.</title>
        <authorList>
            <person name="Hayashi T."/>
            <person name="Makino K."/>
            <person name="Ohnishi M."/>
            <person name="Kurokawa K."/>
            <person name="Ishii K."/>
            <person name="Yokoyama K."/>
            <person name="Han C.-G."/>
            <person name="Ohtsubo E."/>
            <person name="Nakayama K."/>
            <person name="Murata T."/>
            <person name="Tanaka M."/>
            <person name="Tobe T."/>
            <person name="Iida T."/>
            <person name="Takami H."/>
            <person name="Honda T."/>
            <person name="Sasakawa C."/>
            <person name="Ogasawara N."/>
            <person name="Yasunaga T."/>
            <person name="Kuhara S."/>
            <person name="Shiba T."/>
            <person name="Hattori M."/>
            <person name="Shinagawa H."/>
        </authorList>
    </citation>
    <scope>NUCLEOTIDE SEQUENCE [LARGE SCALE GENOMIC DNA]</scope>
    <source>
        <strain>O157:H7 / Sakai / RIMD 0509952 / EHEC</strain>
    </source>
</reference>
<feature type="chain" id="PRO_0000194709" description="L-carnitine CoA-transferase">
    <location>
        <begin position="1"/>
        <end position="405"/>
    </location>
</feature>
<feature type="active site" description="Nucleophile" evidence="1">
    <location>
        <position position="169"/>
    </location>
</feature>
<feature type="binding site" evidence="1">
    <location>
        <position position="97"/>
    </location>
    <ligand>
        <name>CoA</name>
        <dbReference type="ChEBI" id="CHEBI:57287"/>
    </ligand>
</feature>
<feature type="binding site" evidence="1">
    <location>
        <position position="104"/>
    </location>
    <ligand>
        <name>CoA</name>
        <dbReference type="ChEBI" id="CHEBI:57287"/>
    </ligand>
</feature>
<proteinExistence type="inferred from homology"/>
<accession>Q8XA32</accession>
<organism>
    <name type="scientific">Escherichia coli O157:H7</name>
    <dbReference type="NCBI Taxonomy" id="83334"/>
    <lineage>
        <taxon>Bacteria</taxon>
        <taxon>Pseudomonadati</taxon>
        <taxon>Pseudomonadota</taxon>
        <taxon>Gammaproteobacteria</taxon>
        <taxon>Enterobacterales</taxon>
        <taxon>Enterobacteriaceae</taxon>
        <taxon>Escherichia</taxon>
    </lineage>
</organism>
<evidence type="ECO:0000250" key="1"/>
<evidence type="ECO:0000255" key="2">
    <source>
        <dbReference type="HAMAP-Rule" id="MF_01050"/>
    </source>
</evidence>
<protein>
    <recommendedName>
        <fullName>L-carnitine CoA-transferase</fullName>
        <ecNumber>2.8.3.21</ecNumber>
    </recommendedName>
    <alternativeName>
        <fullName>Crotonobetainyl-CoA:carnitine CoA-transferase</fullName>
    </alternativeName>
</protein>
<keyword id="KW-0963">Cytoplasm</keyword>
<keyword id="KW-1185">Reference proteome</keyword>
<keyword id="KW-0808">Transferase</keyword>
<name>CAIB_ECO57</name>
<sequence>MDHLPMPKFGPLAGLRVVFSGIEIAGPFAGQMFAEWGAEVIWIENVAWADTIRVQPNYPQLSRRNLHALSLNIFKDEGREAFLKLMETTDIFIEASKGPAFARRGITDEVLWQHNPKLVIAHLSGFGQYGTEEYTNLPAYNTIAQAFSGYLIQNGDVDQPMPAFPYTADYFSGLTATTAALAALHKARETGKGESIDIAMYEVMLRMGQYFMMDYFNGGEMCPRMSKGKDPYYAGCGLYKCADGYIVMELVGITQIEECFKDIGLAHLLGTPEIPEGTQLIHRIECPYGPLVEEKLDAWLAAHTIAEVKERFAELNIACAKVLTVPELESNPQYVARESITQWQTMDGRTCKGPNIMPKFKNNPGQIWRGMPSHGMDTAAILKNIGYSENDIQELVSKGLAKVED</sequence>
<comment type="function">
    <text evidence="1">Catalyzes the reversible transfer of the CoA moiety from gamma-butyrobetainyl-CoA to L-carnitine to generate L-carnitinyl-CoA and gamma-butyrobetaine. Is also able to catalyze the reversible transfer of the CoA moiety from gamma-butyrobetainyl-CoA or L-carnitinyl-CoA to crotonobetaine to generate crotonobetainyl-CoA (By similarity).</text>
</comment>
<comment type="catalytic activity">
    <reaction>
        <text>crotonobetainyl-CoA + (R)-carnitine = crotonobetaine + (R)-carnitinyl-CoA</text>
        <dbReference type="Rhea" id="RHEA:28526"/>
        <dbReference type="ChEBI" id="CHEBI:16347"/>
        <dbReference type="ChEBI" id="CHEBI:17237"/>
        <dbReference type="ChEBI" id="CHEBI:60932"/>
        <dbReference type="ChEBI" id="CHEBI:60933"/>
        <dbReference type="EC" id="2.8.3.21"/>
    </reaction>
</comment>
<comment type="catalytic activity">
    <reaction>
        <text>4-(trimethylamino)butanoyl-CoA + (R)-carnitine = (R)-carnitinyl-CoA + 4-(trimethylamino)butanoate</text>
        <dbReference type="Rhea" id="RHEA:28418"/>
        <dbReference type="ChEBI" id="CHEBI:16244"/>
        <dbReference type="ChEBI" id="CHEBI:16347"/>
        <dbReference type="ChEBI" id="CHEBI:60932"/>
        <dbReference type="ChEBI" id="CHEBI:61513"/>
        <dbReference type="EC" id="2.8.3.21"/>
    </reaction>
</comment>
<comment type="pathway">
    <text>Amine and polyamine metabolism; carnitine metabolism.</text>
</comment>
<comment type="subunit">
    <text evidence="1">Homodimer.</text>
</comment>
<comment type="subcellular location">
    <subcellularLocation>
        <location evidence="1">Cytoplasm</location>
    </subcellularLocation>
</comment>
<comment type="similarity">
    <text evidence="2">Belongs to the CoA-transferase III family. CaiB subfamily.</text>
</comment>
<dbReference type="EC" id="2.8.3.21"/>
<dbReference type="EMBL" id="AE005174">
    <property type="protein sequence ID" value="AAG54341.1"/>
    <property type="molecule type" value="Genomic_DNA"/>
</dbReference>
<dbReference type="EMBL" id="BA000007">
    <property type="protein sequence ID" value="BAB33464.1"/>
    <property type="molecule type" value="Genomic_DNA"/>
</dbReference>
<dbReference type="PIR" id="A85485">
    <property type="entry name" value="A85485"/>
</dbReference>
<dbReference type="PIR" id="A90634">
    <property type="entry name" value="A90634"/>
</dbReference>
<dbReference type="RefSeq" id="NP_308068.1">
    <property type="nucleotide sequence ID" value="NC_002695.1"/>
</dbReference>
<dbReference type="RefSeq" id="WP_000349922.1">
    <property type="nucleotide sequence ID" value="NZ_VOAI01000002.1"/>
</dbReference>
<dbReference type="SMR" id="Q8XA32"/>
<dbReference type="STRING" id="155864.Z0044"/>
<dbReference type="GeneID" id="913438"/>
<dbReference type="KEGG" id="ece:Z0044"/>
<dbReference type="KEGG" id="ecs:ECs_0041"/>
<dbReference type="PATRIC" id="fig|386585.9.peg.138"/>
<dbReference type="eggNOG" id="COG1804">
    <property type="taxonomic scope" value="Bacteria"/>
</dbReference>
<dbReference type="HOGENOM" id="CLU_033975_2_0_6"/>
<dbReference type="OMA" id="HRPGFGT"/>
<dbReference type="UniPathway" id="UPA00117"/>
<dbReference type="Proteomes" id="UP000000558">
    <property type="component" value="Chromosome"/>
</dbReference>
<dbReference type="Proteomes" id="UP000002519">
    <property type="component" value="Chromosome"/>
</dbReference>
<dbReference type="GO" id="GO:0005737">
    <property type="term" value="C:cytoplasm"/>
    <property type="evidence" value="ECO:0007669"/>
    <property type="project" value="UniProtKB-SubCell"/>
</dbReference>
<dbReference type="GO" id="GO:0008735">
    <property type="term" value="F:L-carnitine CoA-transferase activity"/>
    <property type="evidence" value="ECO:0007669"/>
    <property type="project" value="RHEA"/>
</dbReference>
<dbReference type="GO" id="GO:0009437">
    <property type="term" value="P:carnitine metabolic process"/>
    <property type="evidence" value="ECO:0007669"/>
    <property type="project" value="UniProtKB-UniRule"/>
</dbReference>
<dbReference type="FunFam" id="3.30.1540.10:FF:000001">
    <property type="entry name" value="L-carnitine CoA-transferase"/>
    <property type="match status" value="1"/>
</dbReference>
<dbReference type="Gene3D" id="3.40.50.10540">
    <property type="entry name" value="Crotonobetainyl-coa:carnitine coa-transferase, domain 1"/>
    <property type="match status" value="1"/>
</dbReference>
<dbReference type="Gene3D" id="3.30.1540.10">
    <property type="entry name" value="formyl-coa transferase, domain 3"/>
    <property type="match status" value="1"/>
</dbReference>
<dbReference type="HAMAP" id="MF_01050">
    <property type="entry name" value="CaiB"/>
    <property type="match status" value="1"/>
</dbReference>
<dbReference type="InterPro" id="IPR050509">
    <property type="entry name" value="CoA-transferase_III"/>
</dbReference>
<dbReference type="InterPro" id="IPR023452">
    <property type="entry name" value="CoA-Trfase_CaiB"/>
</dbReference>
<dbReference type="InterPro" id="IPR003673">
    <property type="entry name" value="CoA-Trfase_fam_III"/>
</dbReference>
<dbReference type="InterPro" id="IPR044855">
    <property type="entry name" value="CoA-Trfase_III_dom3_sf"/>
</dbReference>
<dbReference type="InterPro" id="IPR023606">
    <property type="entry name" value="CoA-Trfase_III_dom_1_sf"/>
</dbReference>
<dbReference type="NCBIfam" id="NF002914">
    <property type="entry name" value="PRK03525.1"/>
    <property type="match status" value="1"/>
</dbReference>
<dbReference type="PANTHER" id="PTHR48228:SF6">
    <property type="entry name" value="L-CARNITINE COA-TRANSFERASE"/>
    <property type="match status" value="1"/>
</dbReference>
<dbReference type="PANTHER" id="PTHR48228">
    <property type="entry name" value="SUCCINYL-COA--D-CITRAMALATE COA-TRANSFERASE"/>
    <property type="match status" value="1"/>
</dbReference>
<dbReference type="Pfam" id="PF02515">
    <property type="entry name" value="CoA_transf_3"/>
    <property type="match status" value="1"/>
</dbReference>
<dbReference type="SUPFAM" id="SSF89796">
    <property type="entry name" value="CoA-transferase family III (CaiB/BaiF)"/>
    <property type="match status" value="1"/>
</dbReference>